<keyword id="KW-0004">4Fe-4S</keyword>
<keyword id="KW-0408">Iron</keyword>
<keyword id="KW-0411">Iron-sulfur</keyword>
<keyword id="KW-0414">Isoprene biosynthesis</keyword>
<keyword id="KW-0479">Metal-binding</keyword>
<keyword id="KW-0560">Oxidoreductase</keyword>
<gene>
    <name evidence="1" type="primary">ispH</name>
    <name type="synonym">lytB</name>
    <name type="ordered locus">BCE_4368</name>
</gene>
<dbReference type="EC" id="1.17.7.4" evidence="1"/>
<dbReference type="EMBL" id="AE017194">
    <property type="protein sequence ID" value="AAS43269.1"/>
    <property type="molecule type" value="Genomic_DNA"/>
</dbReference>
<dbReference type="SMR" id="Q730P8"/>
<dbReference type="DNASU" id="2750428"/>
<dbReference type="KEGG" id="bca:BCE_4368"/>
<dbReference type="HOGENOM" id="CLU_027486_0_0_9"/>
<dbReference type="UniPathway" id="UPA00056">
    <property type="reaction ID" value="UER00097"/>
</dbReference>
<dbReference type="UniPathway" id="UPA00059">
    <property type="reaction ID" value="UER00105"/>
</dbReference>
<dbReference type="Proteomes" id="UP000002527">
    <property type="component" value="Chromosome"/>
</dbReference>
<dbReference type="GO" id="GO:0051539">
    <property type="term" value="F:4 iron, 4 sulfur cluster binding"/>
    <property type="evidence" value="ECO:0007669"/>
    <property type="project" value="UniProtKB-UniRule"/>
</dbReference>
<dbReference type="GO" id="GO:0051745">
    <property type="term" value="F:4-hydroxy-3-methylbut-2-enyl diphosphate reductase activity"/>
    <property type="evidence" value="ECO:0007669"/>
    <property type="project" value="UniProtKB-UniRule"/>
</dbReference>
<dbReference type="GO" id="GO:0046872">
    <property type="term" value="F:metal ion binding"/>
    <property type="evidence" value="ECO:0007669"/>
    <property type="project" value="UniProtKB-KW"/>
</dbReference>
<dbReference type="GO" id="GO:0050992">
    <property type="term" value="P:dimethylallyl diphosphate biosynthetic process"/>
    <property type="evidence" value="ECO:0007669"/>
    <property type="project" value="UniProtKB-UniRule"/>
</dbReference>
<dbReference type="GO" id="GO:0019288">
    <property type="term" value="P:isopentenyl diphosphate biosynthetic process, methylerythritol 4-phosphate pathway"/>
    <property type="evidence" value="ECO:0007669"/>
    <property type="project" value="UniProtKB-UniRule"/>
</dbReference>
<dbReference type="GO" id="GO:0016114">
    <property type="term" value="P:terpenoid biosynthetic process"/>
    <property type="evidence" value="ECO:0007669"/>
    <property type="project" value="UniProtKB-UniRule"/>
</dbReference>
<dbReference type="CDD" id="cd13944">
    <property type="entry name" value="lytB_ispH"/>
    <property type="match status" value="1"/>
</dbReference>
<dbReference type="Gene3D" id="3.40.50.11270">
    <property type="match status" value="1"/>
</dbReference>
<dbReference type="Gene3D" id="3.40.1010.20">
    <property type="entry name" value="4-hydroxy-3-methylbut-2-enyl diphosphate reductase, catalytic domain"/>
    <property type="match status" value="2"/>
</dbReference>
<dbReference type="HAMAP" id="MF_00191">
    <property type="entry name" value="IspH"/>
    <property type="match status" value="1"/>
</dbReference>
<dbReference type="InterPro" id="IPR003451">
    <property type="entry name" value="LytB/IspH"/>
</dbReference>
<dbReference type="NCBIfam" id="TIGR00216">
    <property type="entry name" value="ispH_lytB"/>
    <property type="match status" value="1"/>
</dbReference>
<dbReference type="NCBIfam" id="NF002187">
    <property type="entry name" value="PRK01045.1-1"/>
    <property type="match status" value="1"/>
</dbReference>
<dbReference type="PANTHER" id="PTHR30426">
    <property type="entry name" value="4-HYDROXY-3-METHYLBUT-2-ENYL DIPHOSPHATE REDUCTASE"/>
    <property type="match status" value="1"/>
</dbReference>
<dbReference type="PANTHER" id="PTHR30426:SF0">
    <property type="entry name" value="4-HYDROXY-3-METHYLBUT-2-ENYL DIPHOSPHATE REDUCTASE"/>
    <property type="match status" value="1"/>
</dbReference>
<dbReference type="Pfam" id="PF02401">
    <property type="entry name" value="LYTB"/>
    <property type="match status" value="1"/>
</dbReference>
<sequence>MKIVKISPRGYCYGVVDAMVIARNAALDTSLPRPIYILGMIVHNKHVTDAFEEDGIITLDGPSRLDILDKIDSGTVIFTAHGVSPEVKQRAKEKGLTTIDATCPDVTKTHDLIEAKKAEGYHVIYIGKKNHPEPEGAVGIAPDIVHLIERADDLKTLEIPTDKILVTNQTTMSQWDVQHLMEDIQKKFPTAEFHKEICLATQVRQEAVAKQADVADLTIVVGDPKSNNSNRLAQVSQEIAGTKAYRVADVSEIKLEWLQGVENVAVTAGASTPTPITKEVIAFLEQYDPMNPATWERVRKVPLQKILPRVKVKKEQ</sequence>
<evidence type="ECO:0000255" key="1">
    <source>
        <dbReference type="HAMAP-Rule" id="MF_00191"/>
    </source>
</evidence>
<name>ISPH_BACC1</name>
<feature type="chain" id="PRO_0000128769" description="4-hydroxy-3-methylbut-2-enyl diphosphate reductase">
    <location>
        <begin position="1"/>
        <end position="316"/>
    </location>
</feature>
<feature type="active site" description="Proton donor" evidence="1">
    <location>
        <position position="133"/>
    </location>
</feature>
<feature type="binding site" evidence="1">
    <location>
        <position position="12"/>
    </location>
    <ligand>
        <name>[4Fe-4S] cluster</name>
        <dbReference type="ChEBI" id="CHEBI:49883"/>
    </ligand>
</feature>
<feature type="binding site" evidence="1">
    <location>
        <position position="43"/>
    </location>
    <ligand>
        <name>(2E)-4-hydroxy-3-methylbut-2-enyl diphosphate</name>
        <dbReference type="ChEBI" id="CHEBI:128753"/>
    </ligand>
</feature>
<feature type="binding site" evidence="1">
    <location>
        <position position="43"/>
    </location>
    <ligand>
        <name>dimethylallyl diphosphate</name>
        <dbReference type="ChEBI" id="CHEBI:57623"/>
    </ligand>
</feature>
<feature type="binding site" evidence="1">
    <location>
        <position position="43"/>
    </location>
    <ligand>
        <name>isopentenyl diphosphate</name>
        <dbReference type="ChEBI" id="CHEBI:128769"/>
    </ligand>
</feature>
<feature type="binding site" evidence="1">
    <location>
        <position position="81"/>
    </location>
    <ligand>
        <name>(2E)-4-hydroxy-3-methylbut-2-enyl diphosphate</name>
        <dbReference type="ChEBI" id="CHEBI:128753"/>
    </ligand>
</feature>
<feature type="binding site" evidence="1">
    <location>
        <position position="81"/>
    </location>
    <ligand>
        <name>dimethylallyl diphosphate</name>
        <dbReference type="ChEBI" id="CHEBI:57623"/>
    </ligand>
</feature>
<feature type="binding site" evidence="1">
    <location>
        <position position="81"/>
    </location>
    <ligand>
        <name>isopentenyl diphosphate</name>
        <dbReference type="ChEBI" id="CHEBI:128769"/>
    </ligand>
</feature>
<feature type="binding site" evidence="1">
    <location>
        <position position="103"/>
    </location>
    <ligand>
        <name>[4Fe-4S] cluster</name>
        <dbReference type="ChEBI" id="CHEBI:49883"/>
    </ligand>
</feature>
<feature type="binding site" evidence="1">
    <location>
        <position position="131"/>
    </location>
    <ligand>
        <name>(2E)-4-hydroxy-3-methylbut-2-enyl diphosphate</name>
        <dbReference type="ChEBI" id="CHEBI:128753"/>
    </ligand>
</feature>
<feature type="binding site" evidence="1">
    <location>
        <position position="131"/>
    </location>
    <ligand>
        <name>dimethylallyl diphosphate</name>
        <dbReference type="ChEBI" id="CHEBI:57623"/>
    </ligand>
</feature>
<feature type="binding site" evidence="1">
    <location>
        <position position="131"/>
    </location>
    <ligand>
        <name>isopentenyl diphosphate</name>
        <dbReference type="ChEBI" id="CHEBI:128769"/>
    </ligand>
</feature>
<feature type="binding site" evidence="1">
    <location>
        <position position="170"/>
    </location>
    <ligand>
        <name>(2E)-4-hydroxy-3-methylbut-2-enyl diphosphate</name>
        <dbReference type="ChEBI" id="CHEBI:128753"/>
    </ligand>
</feature>
<feature type="binding site" evidence="1">
    <location>
        <position position="198"/>
    </location>
    <ligand>
        <name>[4Fe-4S] cluster</name>
        <dbReference type="ChEBI" id="CHEBI:49883"/>
    </ligand>
</feature>
<feature type="binding site" evidence="1">
    <location>
        <position position="226"/>
    </location>
    <ligand>
        <name>(2E)-4-hydroxy-3-methylbut-2-enyl diphosphate</name>
        <dbReference type="ChEBI" id="CHEBI:128753"/>
    </ligand>
</feature>
<feature type="binding site" evidence="1">
    <location>
        <position position="226"/>
    </location>
    <ligand>
        <name>dimethylallyl diphosphate</name>
        <dbReference type="ChEBI" id="CHEBI:57623"/>
    </ligand>
</feature>
<feature type="binding site" evidence="1">
    <location>
        <position position="226"/>
    </location>
    <ligand>
        <name>isopentenyl diphosphate</name>
        <dbReference type="ChEBI" id="CHEBI:128769"/>
    </ligand>
</feature>
<feature type="binding site" evidence="1">
    <location>
        <position position="228"/>
    </location>
    <ligand>
        <name>(2E)-4-hydroxy-3-methylbut-2-enyl diphosphate</name>
        <dbReference type="ChEBI" id="CHEBI:128753"/>
    </ligand>
</feature>
<feature type="binding site" evidence="1">
    <location>
        <position position="228"/>
    </location>
    <ligand>
        <name>dimethylallyl diphosphate</name>
        <dbReference type="ChEBI" id="CHEBI:57623"/>
    </ligand>
</feature>
<feature type="binding site" evidence="1">
    <location>
        <position position="228"/>
    </location>
    <ligand>
        <name>isopentenyl diphosphate</name>
        <dbReference type="ChEBI" id="CHEBI:128769"/>
    </ligand>
</feature>
<feature type="binding site" evidence="1">
    <location>
        <position position="271"/>
    </location>
    <ligand>
        <name>(2E)-4-hydroxy-3-methylbut-2-enyl diphosphate</name>
        <dbReference type="ChEBI" id="CHEBI:128753"/>
    </ligand>
</feature>
<feature type="binding site" evidence="1">
    <location>
        <position position="271"/>
    </location>
    <ligand>
        <name>dimethylallyl diphosphate</name>
        <dbReference type="ChEBI" id="CHEBI:57623"/>
    </ligand>
</feature>
<feature type="binding site" evidence="1">
    <location>
        <position position="271"/>
    </location>
    <ligand>
        <name>isopentenyl diphosphate</name>
        <dbReference type="ChEBI" id="CHEBI:128769"/>
    </ligand>
</feature>
<reference key="1">
    <citation type="journal article" date="2004" name="Nucleic Acids Res.">
        <title>The genome sequence of Bacillus cereus ATCC 10987 reveals metabolic adaptations and a large plasmid related to Bacillus anthracis pXO1.</title>
        <authorList>
            <person name="Rasko D.A."/>
            <person name="Ravel J."/>
            <person name="Oekstad O.A."/>
            <person name="Helgason E."/>
            <person name="Cer R.Z."/>
            <person name="Jiang L."/>
            <person name="Shores K.A."/>
            <person name="Fouts D.E."/>
            <person name="Tourasse N.J."/>
            <person name="Angiuoli S.V."/>
            <person name="Kolonay J.F."/>
            <person name="Nelson W.C."/>
            <person name="Kolstoe A.-B."/>
            <person name="Fraser C.M."/>
            <person name="Read T.D."/>
        </authorList>
    </citation>
    <scope>NUCLEOTIDE SEQUENCE [LARGE SCALE GENOMIC DNA]</scope>
    <source>
        <strain>ATCC 10987 / NRS 248</strain>
    </source>
</reference>
<protein>
    <recommendedName>
        <fullName evidence="1">4-hydroxy-3-methylbut-2-enyl diphosphate reductase</fullName>
        <shortName evidence="1">HMBPP reductase</shortName>
        <ecNumber evidence="1">1.17.7.4</ecNumber>
    </recommendedName>
</protein>
<comment type="function">
    <text evidence="1">Catalyzes the conversion of 1-hydroxy-2-methyl-2-(E)-butenyl 4-diphosphate (HMBPP) into a mixture of isopentenyl diphosphate (IPP) and dimethylallyl diphosphate (DMAPP). Acts in the terminal step of the DOXP/MEP pathway for isoprenoid precursor biosynthesis.</text>
</comment>
<comment type="catalytic activity">
    <reaction evidence="1">
        <text>isopentenyl diphosphate + 2 oxidized [2Fe-2S]-[ferredoxin] + H2O = (2E)-4-hydroxy-3-methylbut-2-enyl diphosphate + 2 reduced [2Fe-2S]-[ferredoxin] + 2 H(+)</text>
        <dbReference type="Rhea" id="RHEA:24488"/>
        <dbReference type="Rhea" id="RHEA-COMP:10000"/>
        <dbReference type="Rhea" id="RHEA-COMP:10001"/>
        <dbReference type="ChEBI" id="CHEBI:15377"/>
        <dbReference type="ChEBI" id="CHEBI:15378"/>
        <dbReference type="ChEBI" id="CHEBI:33737"/>
        <dbReference type="ChEBI" id="CHEBI:33738"/>
        <dbReference type="ChEBI" id="CHEBI:128753"/>
        <dbReference type="ChEBI" id="CHEBI:128769"/>
        <dbReference type="EC" id="1.17.7.4"/>
    </reaction>
</comment>
<comment type="catalytic activity">
    <reaction evidence="1">
        <text>dimethylallyl diphosphate + 2 oxidized [2Fe-2S]-[ferredoxin] + H2O = (2E)-4-hydroxy-3-methylbut-2-enyl diphosphate + 2 reduced [2Fe-2S]-[ferredoxin] + 2 H(+)</text>
        <dbReference type="Rhea" id="RHEA:24825"/>
        <dbReference type="Rhea" id="RHEA-COMP:10000"/>
        <dbReference type="Rhea" id="RHEA-COMP:10001"/>
        <dbReference type="ChEBI" id="CHEBI:15377"/>
        <dbReference type="ChEBI" id="CHEBI:15378"/>
        <dbReference type="ChEBI" id="CHEBI:33737"/>
        <dbReference type="ChEBI" id="CHEBI:33738"/>
        <dbReference type="ChEBI" id="CHEBI:57623"/>
        <dbReference type="ChEBI" id="CHEBI:128753"/>
        <dbReference type="EC" id="1.17.7.4"/>
    </reaction>
</comment>
<comment type="cofactor">
    <cofactor evidence="1">
        <name>[4Fe-4S] cluster</name>
        <dbReference type="ChEBI" id="CHEBI:49883"/>
    </cofactor>
    <text evidence="1">Binds 1 [4Fe-4S] cluster per subunit.</text>
</comment>
<comment type="pathway">
    <text evidence="1">Isoprenoid biosynthesis; dimethylallyl diphosphate biosynthesis; dimethylallyl diphosphate from (2E)-4-hydroxy-3-methylbutenyl diphosphate: step 1/1.</text>
</comment>
<comment type="pathway">
    <text evidence="1">Isoprenoid biosynthesis; isopentenyl diphosphate biosynthesis via DXP pathway; isopentenyl diphosphate from 1-deoxy-D-xylulose 5-phosphate: step 6/6.</text>
</comment>
<comment type="similarity">
    <text evidence="1">Belongs to the IspH family.</text>
</comment>
<accession>Q730P8</accession>
<organism>
    <name type="scientific">Bacillus cereus (strain ATCC 10987 / NRS 248)</name>
    <dbReference type="NCBI Taxonomy" id="222523"/>
    <lineage>
        <taxon>Bacteria</taxon>
        <taxon>Bacillati</taxon>
        <taxon>Bacillota</taxon>
        <taxon>Bacilli</taxon>
        <taxon>Bacillales</taxon>
        <taxon>Bacillaceae</taxon>
        <taxon>Bacillus</taxon>
        <taxon>Bacillus cereus group</taxon>
    </lineage>
</organism>
<proteinExistence type="inferred from homology"/>